<sequence>MEHNRQQLRLMQLSSSSLPVGSFTWSQGLEWAVEAGWITTDAEFKRWQIQQMEQSFFCVDLPLFIRLYRACEQNDAVSARRWTAYLLACRETRELREEERNRGAAFTRLIKSWEPDCPQEWLPLFSQSQLCGMAWLGVRWEISAHELALSLGYSWIESAVMAGVKLVPFGQQAAQRLIIELSDHFAAGLEHAWRRGDDELGAATPLSAIASARHETQYSRLFRS</sequence>
<gene>
    <name evidence="1" type="primary">ureF</name>
    <name type="ordered locus">Ent638_3468</name>
</gene>
<name>UREF_ENT38</name>
<accession>A4WEJ7</accession>
<evidence type="ECO:0000255" key="1">
    <source>
        <dbReference type="HAMAP-Rule" id="MF_01385"/>
    </source>
</evidence>
<protein>
    <recommendedName>
        <fullName evidence="1">Urease accessory protein UreF</fullName>
    </recommendedName>
</protein>
<feature type="chain" id="PRO_0000344121" description="Urease accessory protein UreF">
    <location>
        <begin position="1"/>
        <end position="224"/>
    </location>
</feature>
<proteinExistence type="inferred from homology"/>
<keyword id="KW-0143">Chaperone</keyword>
<keyword id="KW-0963">Cytoplasm</keyword>
<keyword id="KW-0996">Nickel insertion</keyword>
<reference key="1">
    <citation type="journal article" date="2010" name="PLoS Genet.">
        <title>Genome sequence of the plant growth promoting endophytic bacterium Enterobacter sp. 638.</title>
        <authorList>
            <person name="Taghavi S."/>
            <person name="van der Lelie D."/>
            <person name="Hoffman A."/>
            <person name="Zhang Y.B."/>
            <person name="Walla M.D."/>
            <person name="Vangronsveld J."/>
            <person name="Newman L."/>
            <person name="Monchy S."/>
        </authorList>
    </citation>
    <scope>NUCLEOTIDE SEQUENCE [LARGE SCALE GENOMIC DNA]</scope>
    <source>
        <strain>638</strain>
    </source>
</reference>
<dbReference type="EMBL" id="CP000653">
    <property type="protein sequence ID" value="ABP62127.1"/>
    <property type="molecule type" value="Genomic_DNA"/>
</dbReference>
<dbReference type="RefSeq" id="WP_015960455.1">
    <property type="nucleotide sequence ID" value="NC_009436.1"/>
</dbReference>
<dbReference type="SMR" id="A4WEJ7"/>
<dbReference type="STRING" id="399742.Ent638_3468"/>
<dbReference type="KEGG" id="ent:Ent638_3468"/>
<dbReference type="eggNOG" id="COG0830">
    <property type="taxonomic scope" value="Bacteria"/>
</dbReference>
<dbReference type="HOGENOM" id="CLU_049215_2_1_6"/>
<dbReference type="OrthoDB" id="9798772at2"/>
<dbReference type="Proteomes" id="UP000000230">
    <property type="component" value="Chromosome"/>
</dbReference>
<dbReference type="GO" id="GO:0005737">
    <property type="term" value="C:cytoplasm"/>
    <property type="evidence" value="ECO:0007669"/>
    <property type="project" value="UniProtKB-SubCell"/>
</dbReference>
<dbReference type="GO" id="GO:0016151">
    <property type="term" value="F:nickel cation binding"/>
    <property type="evidence" value="ECO:0007669"/>
    <property type="project" value="UniProtKB-UniRule"/>
</dbReference>
<dbReference type="Gene3D" id="1.10.4190.10">
    <property type="entry name" value="Urease accessory protein UreF"/>
    <property type="match status" value="1"/>
</dbReference>
<dbReference type="HAMAP" id="MF_01385">
    <property type="entry name" value="UreF"/>
    <property type="match status" value="1"/>
</dbReference>
<dbReference type="InterPro" id="IPR002639">
    <property type="entry name" value="UreF"/>
</dbReference>
<dbReference type="InterPro" id="IPR038277">
    <property type="entry name" value="UreF_sf"/>
</dbReference>
<dbReference type="PANTHER" id="PTHR33620">
    <property type="entry name" value="UREASE ACCESSORY PROTEIN F"/>
    <property type="match status" value="1"/>
</dbReference>
<dbReference type="PANTHER" id="PTHR33620:SF1">
    <property type="entry name" value="UREASE ACCESSORY PROTEIN F"/>
    <property type="match status" value="1"/>
</dbReference>
<dbReference type="Pfam" id="PF01730">
    <property type="entry name" value="UreF"/>
    <property type="match status" value="1"/>
</dbReference>
<dbReference type="PIRSF" id="PIRSF009467">
    <property type="entry name" value="Ureas_acces_UreF"/>
    <property type="match status" value="1"/>
</dbReference>
<organism>
    <name type="scientific">Enterobacter sp. (strain 638)</name>
    <dbReference type="NCBI Taxonomy" id="399742"/>
    <lineage>
        <taxon>Bacteria</taxon>
        <taxon>Pseudomonadati</taxon>
        <taxon>Pseudomonadota</taxon>
        <taxon>Gammaproteobacteria</taxon>
        <taxon>Enterobacterales</taxon>
        <taxon>Enterobacteriaceae</taxon>
        <taxon>Enterobacter</taxon>
    </lineage>
</organism>
<comment type="function">
    <text evidence="1">Required for maturation of urease via the functional incorporation of the urease nickel metallocenter.</text>
</comment>
<comment type="subunit">
    <text evidence="1">UreD, UreF and UreG form a complex that acts as a GTP-hydrolysis-dependent molecular chaperone, activating the urease apoprotein by helping to assemble the nickel containing metallocenter of UreC. The UreE protein probably delivers the nickel.</text>
</comment>
<comment type="subcellular location">
    <subcellularLocation>
        <location evidence="1">Cytoplasm</location>
    </subcellularLocation>
</comment>
<comment type="similarity">
    <text evidence="1">Belongs to the UreF family.</text>
</comment>